<gene>
    <name type="primary">modD</name>
    <name type="ordered locus">PM1111</name>
</gene>
<name>MODD_PASMU</name>
<evidence type="ECO:0000305" key="1"/>
<keyword id="KW-0328">Glycosyltransferase</keyword>
<keyword id="KW-1185">Reference proteome</keyword>
<keyword id="KW-0808">Transferase</keyword>
<reference key="1">
    <citation type="journal article" date="2001" name="Proc. Natl. Acad. Sci. U.S.A.">
        <title>Complete genomic sequence of Pasteurella multocida Pm70.</title>
        <authorList>
            <person name="May B.J."/>
            <person name="Zhang Q."/>
            <person name="Li L.L."/>
            <person name="Paustian M.L."/>
            <person name="Whittam T.S."/>
            <person name="Kapur V."/>
        </authorList>
    </citation>
    <scope>NUCLEOTIDE SEQUENCE [LARGE SCALE GENOMIC DNA]</scope>
    <source>
        <strain>Pm70</strain>
    </source>
</reference>
<organism>
    <name type="scientific">Pasteurella multocida (strain Pm70)</name>
    <dbReference type="NCBI Taxonomy" id="272843"/>
    <lineage>
        <taxon>Bacteria</taxon>
        <taxon>Pseudomonadati</taxon>
        <taxon>Pseudomonadota</taxon>
        <taxon>Gammaproteobacteria</taxon>
        <taxon>Pasteurellales</taxon>
        <taxon>Pasteurellaceae</taxon>
        <taxon>Pasteurella</taxon>
    </lineage>
</organism>
<feature type="chain" id="PRO_0000155961" description="Putative pyrophosphorylase ModD">
    <location>
        <begin position="1"/>
        <end position="282"/>
    </location>
</feature>
<comment type="similarity">
    <text evidence="1">Belongs to the NadC/ModD family.</text>
</comment>
<sequence length="282" mass="31078">MLYFSDNELDDFLLEDIYRGDLTTHALGLESIPAEICFKRKNAGIVAGISIAEKLLRKLDIHPQVYVKEGEFVEAGSLLLSAKGSADKLHQAWKVVQLVLEWSCGVAQYTAEMISNAKAINPAAVVACTRKSIPNTRKLATNAVLAAGGHIHRQGLSETLLVFTNHRNLLSDPEDWQGIVTRLKQQAPENKITLEADNLVQFEQMLTADPDIIQLDKFTLEQVKQALHLLALANKNITLSVAGGVNKHNVAEYAKLGIQLFITSAPYYAAPEDIKVIIEKQV</sequence>
<accession>Q9CLU4</accession>
<dbReference type="EC" id="2.4.2.-"/>
<dbReference type="EMBL" id="AE004439">
    <property type="protein sequence ID" value="AAK03195.1"/>
    <property type="molecule type" value="Genomic_DNA"/>
</dbReference>
<dbReference type="RefSeq" id="WP_005757236.1">
    <property type="nucleotide sequence ID" value="NC_002663.1"/>
</dbReference>
<dbReference type="SMR" id="Q9CLU4"/>
<dbReference type="STRING" id="272843.PM1111"/>
<dbReference type="EnsemblBacteria" id="AAK03195">
    <property type="protein sequence ID" value="AAK03195"/>
    <property type="gene ID" value="PM1111"/>
</dbReference>
<dbReference type="GeneID" id="77206428"/>
<dbReference type="KEGG" id="pmu:PM1111"/>
<dbReference type="PATRIC" id="fig|272843.6.peg.1124"/>
<dbReference type="HOGENOM" id="CLU_039622_2_1_6"/>
<dbReference type="OrthoDB" id="8216773at2"/>
<dbReference type="Proteomes" id="UP000000809">
    <property type="component" value="Chromosome"/>
</dbReference>
<dbReference type="GO" id="GO:0005737">
    <property type="term" value="C:cytoplasm"/>
    <property type="evidence" value="ECO:0007669"/>
    <property type="project" value="TreeGrafter"/>
</dbReference>
<dbReference type="GO" id="GO:0004514">
    <property type="term" value="F:nicotinate-nucleotide diphosphorylase (carboxylating) activity"/>
    <property type="evidence" value="ECO:0007669"/>
    <property type="project" value="InterPro"/>
</dbReference>
<dbReference type="GO" id="GO:0009435">
    <property type="term" value="P:NAD biosynthetic process"/>
    <property type="evidence" value="ECO:0007669"/>
    <property type="project" value="InterPro"/>
</dbReference>
<dbReference type="GO" id="GO:0034213">
    <property type="term" value="P:quinolinate catabolic process"/>
    <property type="evidence" value="ECO:0007669"/>
    <property type="project" value="TreeGrafter"/>
</dbReference>
<dbReference type="CDD" id="cd01573">
    <property type="entry name" value="modD_like"/>
    <property type="match status" value="1"/>
</dbReference>
<dbReference type="FunFam" id="3.20.20.70:FF:000030">
    <property type="entry name" value="Nicotinate-nucleotide pyrophosphorylase, carboxylating"/>
    <property type="match status" value="1"/>
</dbReference>
<dbReference type="Gene3D" id="3.20.20.70">
    <property type="entry name" value="Aldolase class I"/>
    <property type="match status" value="1"/>
</dbReference>
<dbReference type="Gene3D" id="3.90.1170.20">
    <property type="entry name" value="Quinolinate phosphoribosyl transferase, N-terminal domain"/>
    <property type="match status" value="1"/>
</dbReference>
<dbReference type="InterPro" id="IPR013785">
    <property type="entry name" value="Aldolase_TIM"/>
</dbReference>
<dbReference type="InterPro" id="IPR006242">
    <property type="entry name" value="ModD"/>
</dbReference>
<dbReference type="InterPro" id="IPR027277">
    <property type="entry name" value="NadC/ModD"/>
</dbReference>
<dbReference type="InterPro" id="IPR036068">
    <property type="entry name" value="Nicotinate_pribotase-like_C"/>
</dbReference>
<dbReference type="InterPro" id="IPR037128">
    <property type="entry name" value="Quinolinate_PRibosylTase_N_sf"/>
</dbReference>
<dbReference type="InterPro" id="IPR002638">
    <property type="entry name" value="Quinolinate_PRibosylTrfase_C"/>
</dbReference>
<dbReference type="InterPro" id="IPR022412">
    <property type="entry name" value="Quinolinate_PRibosylTrfase_N"/>
</dbReference>
<dbReference type="NCBIfam" id="TIGR01334">
    <property type="entry name" value="modD"/>
    <property type="match status" value="1"/>
</dbReference>
<dbReference type="PANTHER" id="PTHR32179">
    <property type="entry name" value="NICOTINATE-NUCLEOTIDE PYROPHOSPHORYLASE [CARBOXYLATING]"/>
    <property type="match status" value="1"/>
</dbReference>
<dbReference type="PANTHER" id="PTHR32179:SF4">
    <property type="entry name" value="PYROPHOSPHORYLASE MODD-RELATED"/>
    <property type="match status" value="1"/>
</dbReference>
<dbReference type="Pfam" id="PF01729">
    <property type="entry name" value="QRPTase_C"/>
    <property type="match status" value="1"/>
</dbReference>
<dbReference type="Pfam" id="PF02749">
    <property type="entry name" value="QRPTase_N"/>
    <property type="match status" value="1"/>
</dbReference>
<dbReference type="PIRSF" id="PIRSF006250">
    <property type="entry name" value="NadC_ModD"/>
    <property type="match status" value="1"/>
</dbReference>
<dbReference type="SUPFAM" id="SSF51690">
    <property type="entry name" value="Nicotinate/Quinolinate PRTase C-terminal domain-like"/>
    <property type="match status" value="1"/>
</dbReference>
<dbReference type="SUPFAM" id="SSF54675">
    <property type="entry name" value="Nicotinate/Quinolinate PRTase N-terminal domain-like"/>
    <property type="match status" value="1"/>
</dbReference>
<protein>
    <recommendedName>
        <fullName>Putative pyrophosphorylase ModD</fullName>
        <ecNumber>2.4.2.-</ecNumber>
    </recommendedName>
</protein>
<proteinExistence type="inferred from homology"/>